<name>RL7_ENTFA</name>
<keyword id="KW-1185">Reference proteome</keyword>
<keyword id="KW-0687">Ribonucleoprotein</keyword>
<keyword id="KW-0689">Ribosomal protein</keyword>
<feature type="chain" id="PRO_0000243421" description="Large ribosomal subunit protein bL12">
    <location>
        <begin position="1"/>
        <end position="122"/>
    </location>
</feature>
<evidence type="ECO:0000255" key="1">
    <source>
        <dbReference type="HAMAP-Rule" id="MF_00368"/>
    </source>
</evidence>
<evidence type="ECO:0000305" key="2"/>
<protein>
    <recommendedName>
        <fullName evidence="1">Large ribosomal subunit protein bL12</fullName>
    </recommendedName>
    <alternativeName>
        <fullName evidence="2">50S ribosomal protein L7/L12</fullName>
    </alternativeName>
</protein>
<accession>Q830Q8</accession>
<sequence>MALNIENIVAELETATILELSELVKAIEEKFDVSAAAPVAVAGPAAGGAAEEQTEFTVELTAAGDQKVKVIKAVREATGLGLKEAKAVVDGAPAPVKEAVSKEEAEALKAALEEVGASVTVK</sequence>
<reference key="1">
    <citation type="journal article" date="2003" name="Science">
        <title>Role of mobile DNA in the evolution of vancomycin-resistant Enterococcus faecalis.</title>
        <authorList>
            <person name="Paulsen I.T."/>
            <person name="Banerjei L."/>
            <person name="Myers G.S.A."/>
            <person name="Nelson K.E."/>
            <person name="Seshadri R."/>
            <person name="Read T.D."/>
            <person name="Fouts D.E."/>
            <person name="Eisen J.A."/>
            <person name="Gill S.R."/>
            <person name="Heidelberg J.F."/>
            <person name="Tettelin H."/>
            <person name="Dodson R.J."/>
            <person name="Umayam L.A."/>
            <person name="Brinkac L.M."/>
            <person name="Beanan M.J."/>
            <person name="Daugherty S.C."/>
            <person name="DeBoy R.T."/>
            <person name="Durkin S.A."/>
            <person name="Kolonay J.F."/>
            <person name="Madupu R."/>
            <person name="Nelson W.C."/>
            <person name="Vamathevan J.J."/>
            <person name="Tran B."/>
            <person name="Upton J."/>
            <person name="Hansen T."/>
            <person name="Shetty J."/>
            <person name="Khouri H.M."/>
            <person name="Utterback T.R."/>
            <person name="Radune D."/>
            <person name="Ketchum K.A."/>
            <person name="Dougherty B.A."/>
            <person name="Fraser C.M."/>
        </authorList>
    </citation>
    <scope>NUCLEOTIDE SEQUENCE [LARGE SCALE GENOMIC DNA]</scope>
    <source>
        <strain>ATCC 700802 / V583</strain>
    </source>
</reference>
<organism>
    <name type="scientific">Enterococcus faecalis (strain ATCC 700802 / V583)</name>
    <dbReference type="NCBI Taxonomy" id="226185"/>
    <lineage>
        <taxon>Bacteria</taxon>
        <taxon>Bacillati</taxon>
        <taxon>Bacillota</taxon>
        <taxon>Bacilli</taxon>
        <taxon>Lactobacillales</taxon>
        <taxon>Enterococcaceae</taxon>
        <taxon>Enterococcus</taxon>
    </lineage>
</organism>
<proteinExistence type="inferred from homology"/>
<gene>
    <name evidence="1" type="primary">rplL</name>
    <name type="ordered locus">EF_2715</name>
</gene>
<comment type="function">
    <text evidence="1">Forms part of the ribosomal stalk which helps the ribosome interact with GTP-bound translation factors. Is thus essential for accurate translation.</text>
</comment>
<comment type="subunit">
    <text evidence="1">Homodimer. Part of the ribosomal stalk of the 50S ribosomal subunit. Forms a multimeric L10(L12)X complex, where L10 forms an elongated spine to which 2 to 4 L12 dimers bind in a sequential fashion. Binds GTP-bound translation factors.</text>
</comment>
<comment type="similarity">
    <text evidence="1">Belongs to the bacterial ribosomal protein bL12 family.</text>
</comment>
<dbReference type="EMBL" id="AE016830">
    <property type="protein sequence ID" value="AAO82418.1"/>
    <property type="molecule type" value="Genomic_DNA"/>
</dbReference>
<dbReference type="RefSeq" id="NP_816348.1">
    <property type="nucleotide sequence ID" value="NC_004668.1"/>
</dbReference>
<dbReference type="RefSeq" id="WP_002356427.1">
    <property type="nucleotide sequence ID" value="NZ_KE136528.1"/>
</dbReference>
<dbReference type="SMR" id="Q830Q8"/>
<dbReference type="STRING" id="226185.EF_2715"/>
<dbReference type="EnsemblBacteria" id="AAO82418">
    <property type="protein sequence ID" value="AAO82418"/>
    <property type="gene ID" value="EF_2715"/>
</dbReference>
<dbReference type="GeneID" id="60894703"/>
<dbReference type="KEGG" id="efa:EF2715"/>
<dbReference type="PATRIC" id="fig|226185.45.peg.851"/>
<dbReference type="eggNOG" id="COG0222">
    <property type="taxonomic scope" value="Bacteria"/>
</dbReference>
<dbReference type="HOGENOM" id="CLU_086499_3_2_9"/>
<dbReference type="Proteomes" id="UP000001415">
    <property type="component" value="Chromosome"/>
</dbReference>
<dbReference type="GO" id="GO:0022625">
    <property type="term" value="C:cytosolic large ribosomal subunit"/>
    <property type="evidence" value="ECO:0007669"/>
    <property type="project" value="TreeGrafter"/>
</dbReference>
<dbReference type="GO" id="GO:0003729">
    <property type="term" value="F:mRNA binding"/>
    <property type="evidence" value="ECO:0007669"/>
    <property type="project" value="TreeGrafter"/>
</dbReference>
<dbReference type="GO" id="GO:0003735">
    <property type="term" value="F:structural constituent of ribosome"/>
    <property type="evidence" value="ECO:0007669"/>
    <property type="project" value="InterPro"/>
</dbReference>
<dbReference type="GO" id="GO:0006412">
    <property type="term" value="P:translation"/>
    <property type="evidence" value="ECO:0007669"/>
    <property type="project" value="UniProtKB-UniRule"/>
</dbReference>
<dbReference type="CDD" id="cd00387">
    <property type="entry name" value="Ribosomal_L7_L12"/>
    <property type="match status" value="1"/>
</dbReference>
<dbReference type="FunFam" id="3.30.1390.10:FF:000001">
    <property type="entry name" value="50S ribosomal protein L7/L12"/>
    <property type="match status" value="1"/>
</dbReference>
<dbReference type="Gene3D" id="3.30.1390.10">
    <property type="match status" value="1"/>
</dbReference>
<dbReference type="Gene3D" id="1.20.5.710">
    <property type="entry name" value="Single helix bin"/>
    <property type="match status" value="1"/>
</dbReference>
<dbReference type="HAMAP" id="MF_00368">
    <property type="entry name" value="Ribosomal_bL12"/>
    <property type="match status" value="1"/>
</dbReference>
<dbReference type="InterPro" id="IPR000206">
    <property type="entry name" value="Ribosomal_bL12"/>
</dbReference>
<dbReference type="InterPro" id="IPR013823">
    <property type="entry name" value="Ribosomal_bL12_C"/>
</dbReference>
<dbReference type="InterPro" id="IPR014719">
    <property type="entry name" value="Ribosomal_bL12_C/ClpS-like"/>
</dbReference>
<dbReference type="InterPro" id="IPR008932">
    <property type="entry name" value="Ribosomal_bL12_oligo"/>
</dbReference>
<dbReference type="InterPro" id="IPR036235">
    <property type="entry name" value="Ribosomal_bL12_oligo_N_sf"/>
</dbReference>
<dbReference type="NCBIfam" id="TIGR00855">
    <property type="entry name" value="L12"/>
    <property type="match status" value="1"/>
</dbReference>
<dbReference type="PANTHER" id="PTHR45987">
    <property type="entry name" value="39S RIBOSOMAL PROTEIN L12"/>
    <property type="match status" value="1"/>
</dbReference>
<dbReference type="PANTHER" id="PTHR45987:SF4">
    <property type="entry name" value="LARGE RIBOSOMAL SUBUNIT PROTEIN BL12M"/>
    <property type="match status" value="1"/>
</dbReference>
<dbReference type="Pfam" id="PF00542">
    <property type="entry name" value="Ribosomal_L12"/>
    <property type="match status" value="1"/>
</dbReference>
<dbReference type="Pfam" id="PF16320">
    <property type="entry name" value="Ribosomal_L12_N"/>
    <property type="match status" value="1"/>
</dbReference>
<dbReference type="SUPFAM" id="SSF54736">
    <property type="entry name" value="ClpS-like"/>
    <property type="match status" value="1"/>
</dbReference>
<dbReference type="SUPFAM" id="SSF48300">
    <property type="entry name" value="Ribosomal protein L7/12, oligomerisation (N-terminal) domain"/>
    <property type="match status" value="1"/>
</dbReference>